<protein>
    <recommendedName>
        <fullName evidence="1">Histidinol-phosphate aminotransferase</fullName>
        <ecNumber evidence="1">2.6.1.9</ecNumber>
    </recommendedName>
    <alternativeName>
        <fullName evidence="1">Imidazole acetol-phosphate transaminase</fullName>
    </alternativeName>
</protein>
<comment type="catalytic activity">
    <reaction evidence="1">
        <text>L-histidinol phosphate + 2-oxoglutarate = 3-(imidazol-4-yl)-2-oxopropyl phosphate + L-glutamate</text>
        <dbReference type="Rhea" id="RHEA:23744"/>
        <dbReference type="ChEBI" id="CHEBI:16810"/>
        <dbReference type="ChEBI" id="CHEBI:29985"/>
        <dbReference type="ChEBI" id="CHEBI:57766"/>
        <dbReference type="ChEBI" id="CHEBI:57980"/>
        <dbReference type="EC" id="2.6.1.9"/>
    </reaction>
</comment>
<comment type="cofactor">
    <cofactor evidence="1">
        <name>pyridoxal 5'-phosphate</name>
        <dbReference type="ChEBI" id="CHEBI:597326"/>
    </cofactor>
</comment>
<comment type="pathway">
    <text evidence="1">Amino-acid biosynthesis; L-histidine biosynthesis; L-histidine from 5-phospho-alpha-D-ribose 1-diphosphate: step 7/9.</text>
</comment>
<comment type="subunit">
    <text evidence="1">Homodimer.</text>
</comment>
<comment type="similarity">
    <text evidence="1">Belongs to the class-II pyridoxal-phosphate-dependent aminotransferase family. Histidinol-phosphate aminotransferase subfamily.</text>
</comment>
<evidence type="ECO:0000255" key="1">
    <source>
        <dbReference type="HAMAP-Rule" id="MF_01023"/>
    </source>
</evidence>
<gene>
    <name evidence="1" type="primary">hisC</name>
    <name type="ordered locus">Atu3612</name>
    <name type="ORF">AGR_L_2426</name>
</gene>
<sequence length="368" mass="39252">MSAELNQPVPRPGILDIAAYVPGKEHVDGVAKVYKLSSNETPLGPSPKAIEAFSAAASHLEIYPDGQAIALRQAIADVHGLNIANILCGNGSDELLGLLCHVYLGAGDEAIITEHGFLVYKIQIMGAGATPVTVKEKDCVVDVDAILAAVTPKTKMVFLANPGNPTGTYVPVAEIRRLQAGLPKHVVLVLDAAYAEYVRKNDYEAGLELVSGNRNVVMTRTFSKVYGLAALRVGWMYAPVDIIDALNRVRGPFNMSAPAIAAGAAAIRDQAFVQKAVAHNALWMEKLVTTFTGLGLTVTPSVANFILIHFPDQDGKRATDADEFLSRRGYILRAVRGYGFPNALRMTVGSEEANLGVIAALTEFMGQA</sequence>
<proteinExistence type="inferred from homology"/>
<dbReference type="EC" id="2.6.1.9" evidence="1"/>
<dbReference type="EMBL" id="AE007870">
    <property type="protein sequence ID" value="AAK89784.1"/>
    <property type="molecule type" value="Genomic_DNA"/>
</dbReference>
<dbReference type="PIR" id="AB3001">
    <property type="entry name" value="AB3001"/>
</dbReference>
<dbReference type="PIR" id="F98282">
    <property type="entry name" value="F98282"/>
</dbReference>
<dbReference type="RefSeq" id="NP_356999.1">
    <property type="nucleotide sequence ID" value="NC_003063.2"/>
</dbReference>
<dbReference type="RefSeq" id="WP_010973186.1">
    <property type="nucleotide sequence ID" value="NC_003063.2"/>
</dbReference>
<dbReference type="SMR" id="Q8U9W3"/>
<dbReference type="STRING" id="176299.Atu3612"/>
<dbReference type="EnsemblBacteria" id="AAK89784">
    <property type="protein sequence ID" value="AAK89784"/>
    <property type="gene ID" value="Atu3612"/>
</dbReference>
<dbReference type="GeneID" id="1135486"/>
<dbReference type="KEGG" id="atu:Atu3612"/>
<dbReference type="PATRIC" id="fig|176299.10.peg.3459"/>
<dbReference type="eggNOG" id="COG0079">
    <property type="taxonomic scope" value="Bacteria"/>
</dbReference>
<dbReference type="HOGENOM" id="CLU_017584_3_3_5"/>
<dbReference type="OrthoDB" id="9809616at2"/>
<dbReference type="PhylomeDB" id="Q8U9W3"/>
<dbReference type="BioCyc" id="AGRO:ATU3612-MONOMER"/>
<dbReference type="UniPathway" id="UPA00031">
    <property type="reaction ID" value="UER00012"/>
</dbReference>
<dbReference type="Proteomes" id="UP000000813">
    <property type="component" value="Chromosome linear"/>
</dbReference>
<dbReference type="GO" id="GO:0004400">
    <property type="term" value="F:histidinol-phosphate transaminase activity"/>
    <property type="evidence" value="ECO:0007669"/>
    <property type="project" value="UniProtKB-UniRule"/>
</dbReference>
<dbReference type="GO" id="GO:0030170">
    <property type="term" value="F:pyridoxal phosphate binding"/>
    <property type="evidence" value="ECO:0007669"/>
    <property type="project" value="InterPro"/>
</dbReference>
<dbReference type="GO" id="GO:0000105">
    <property type="term" value="P:L-histidine biosynthetic process"/>
    <property type="evidence" value="ECO:0007669"/>
    <property type="project" value="UniProtKB-UniRule"/>
</dbReference>
<dbReference type="CDD" id="cd00609">
    <property type="entry name" value="AAT_like"/>
    <property type="match status" value="1"/>
</dbReference>
<dbReference type="Gene3D" id="3.90.1150.10">
    <property type="entry name" value="Aspartate Aminotransferase, domain 1"/>
    <property type="match status" value="1"/>
</dbReference>
<dbReference type="Gene3D" id="3.40.640.10">
    <property type="entry name" value="Type I PLP-dependent aspartate aminotransferase-like (Major domain)"/>
    <property type="match status" value="1"/>
</dbReference>
<dbReference type="HAMAP" id="MF_01023">
    <property type="entry name" value="HisC_aminotrans_2"/>
    <property type="match status" value="1"/>
</dbReference>
<dbReference type="InterPro" id="IPR004839">
    <property type="entry name" value="Aminotransferase_I/II_large"/>
</dbReference>
<dbReference type="InterPro" id="IPR005861">
    <property type="entry name" value="HisP_aminotrans"/>
</dbReference>
<dbReference type="InterPro" id="IPR050106">
    <property type="entry name" value="HistidinolP_aminotransfase"/>
</dbReference>
<dbReference type="InterPro" id="IPR015424">
    <property type="entry name" value="PyrdxlP-dep_Trfase"/>
</dbReference>
<dbReference type="InterPro" id="IPR015421">
    <property type="entry name" value="PyrdxlP-dep_Trfase_major"/>
</dbReference>
<dbReference type="InterPro" id="IPR015422">
    <property type="entry name" value="PyrdxlP-dep_Trfase_small"/>
</dbReference>
<dbReference type="NCBIfam" id="TIGR01141">
    <property type="entry name" value="hisC"/>
    <property type="match status" value="1"/>
</dbReference>
<dbReference type="PANTHER" id="PTHR43643:SF3">
    <property type="entry name" value="HISTIDINOL-PHOSPHATE AMINOTRANSFERASE"/>
    <property type="match status" value="1"/>
</dbReference>
<dbReference type="PANTHER" id="PTHR43643">
    <property type="entry name" value="HISTIDINOL-PHOSPHATE AMINOTRANSFERASE 2"/>
    <property type="match status" value="1"/>
</dbReference>
<dbReference type="Pfam" id="PF00155">
    <property type="entry name" value="Aminotran_1_2"/>
    <property type="match status" value="1"/>
</dbReference>
<dbReference type="SUPFAM" id="SSF53383">
    <property type="entry name" value="PLP-dependent transferases"/>
    <property type="match status" value="1"/>
</dbReference>
<organism>
    <name type="scientific">Agrobacterium fabrum (strain C58 / ATCC 33970)</name>
    <name type="common">Agrobacterium tumefaciens (strain C58)</name>
    <dbReference type="NCBI Taxonomy" id="176299"/>
    <lineage>
        <taxon>Bacteria</taxon>
        <taxon>Pseudomonadati</taxon>
        <taxon>Pseudomonadota</taxon>
        <taxon>Alphaproteobacteria</taxon>
        <taxon>Hyphomicrobiales</taxon>
        <taxon>Rhizobiaceae</taxon>
        <taxon>Rhizobium/Agrobacterium group</taxon>
        <taxon>Agrobacterium</taxon>
        <taxon>Agrobacterium tumefaciens complex</taxon>
    </lineage>
</organism>
<keyword id="KW-0028">Amino-acid biosynthesis</keyword>
<keyword id="KW-0032">Aminotransferase</keyword>
<keyword id="KW-0368">Histidine biosynthesis</keyword>
<keyword id="KW-0663">Pyridoxal phosphate</keyword>
<keyword id="KW-1185">Reference proteome</keyword>
<keyword id="KW-0808">Transferase</keyword>
<name>HIS8_AGRFC</name>
<feature type="chain" id="PRO_0000153292" description="Histidinol-phosphate aminotransferase">
    <location>
        <begin position="1"/>
        <end position="368"/>
    </location>
</feature>
<feature type="modified residue" description="N6-(pyridoxal phosphate)lysine" evidence="1">
    <location>
        <position position="224"/>
    </location>
</feature>
<accession>Q8U9W3</accession>
<reference key="1">
    <citation type="journal article" date="2001" name="Science">
        <title>The genome of the natural genetic engineer Agrobacterium tumefaciens C58.</title>
        <authorList>
            <person name="Wood D.W."/>
            <person name="Setubal J.C."/>
            <person name="Kaul R."/>
            <person name="Monks D.E."/>
            <person name="Kitajima J.P."/>
            <person name="Okura V.K."/>
            <person name="Zhou Y."/>
            <person name="Chen L."/>
            <person name="Wood G.E."/>
            <person name="Almeida N.F. Jr."/>
            <person name="Woo L."/>
            <person name="Chen Y."/>
            <person name="Paulsen I.T."/>
            <person name="Eisen J.A."/>
            <person name="Karp P.D."/>
            <person name="Bovee D. Sr."/>
            <person name="Chapman P."/>
            <person name="Clendenning J."/>
            <person name="Deatherage G."/>
            <person name="Gillet W."/>
            <person name="Grant C."/>
            <person name="Kutyavin T."/>
            <person name="Levy R."/>
            <person name="Li M.-J."/>
            <person name="McClelland E."/>
            <person name="Palmieri A."/>
            <person name="Raymond C."/>
            <person name="Rouse G."/>
            <person name="Saenphimmachak C."/>
            <person name="Wu Z."/>
            <person name="Romero P."/>
            <person name="Gordon D."/>
            <person name="Zhang S."/>
            <person name="Yoo H."/>
            <person name="Tao Y."/>
            <person name="Biddle P."/>
            <person name="Jung M."/>
            <person name="Krespan W."/>
            <person name="Perry M."/>
            <person name="Gordon-Kamm B."/>
            <person name="Liao L."/>
            <person name="Kim S."/>
            <person name="Hendrick C."/>
            <person name="Zhao Z.-Y."/>
            <person name="Dolan M."/>
            <person name="Chumley F."/>
            <person name="Tingey S.V."/>
            <person name="Tomb J.-F."/>
            <person name="Gordon M.P."/>
            <person name="Olson M.V."/>
            <person name="Nester E.W."/>
        </authorList>
    </citation>
    <scope>NUCLEOTIDE SEQUENCE [LARGE SCALE GENOMIC DNA]</scope>
    <source>
        <strain>C58 / ATCC 33970</strain>
    </source>
</reference>
<reference key="2">
    <citation type="journal article" date="2001" name="Science">
        <title>Genome sequence of the plant pathogen and biotechnology agent Agrobacterium tumefaciens C58.</title>
        <authorList>
            <person name="Goodner B."/>
            <person name="Hinkle G."/>
            <person name="Gattung S."/>
            <person name="Miller N."/>
            <person name="Blanchard M."/>
            <person name="Qurollo B."/>
            <person name="Goldman B.S."/>
            <person name="Cao Y."/>
            <person name="Askenazi M."/>
            <person name="Halling C."/>
            <person name="Mullin L."/>
            <person name="Houmiel K."/>
            <person name="Gordon J."/>
            <person name="Vaudin M."/>
            <person name="Iartchouk O."/>
            <person name="Epp A."/>
            <person name="Liu F."/>
            <person name="Wollam C."/>
            <person name="Allinger M."/>
            <person name="Doughty D."/>
            <person name="Scott C."/>
            <person name="Lappas C."/>
            <person name="Markelz B."/>
            <person name="Flanagan C."/>
            <person name="Crowell C."/>
            <person name="Gurson J."/>
            <person name="Lomo C."/>
            <person name="Sear C."/>
            <person name="Strub G."/>
            <person name="Cielo C."/>
            <person name="Slater S."/>
        </authorList>
    </citation>
    <scope>NUCLEOTIDE SEQUENCE [LARGE SCALE GENOMIC DNA]</scope>
    <source>
        <strain>C58 / ATCC 33970</strain>
    </source>
</reference>